<keyword id="KW-0030">Aminoacyl-tRNA synthetase</keyword>
<keyword id="KW-0067">ATP-binding</keyword>
<keyword id="KW-0963">Cytoplasm</keyword>
<keyword id="KW-0436">Ligase</keyword>
<keyword id="KW-0547">Nucleotide-binding</keyword>
<keyword id="KW-0648">Protein biosynthesis</keyword>
<feature type="chain" id="PRO_1000199229" description="Leucine--tRNA ligase">
    <location>
        <begin position="1"/>
        <end position="833"/>
    </location>
</feature>
<feature type="short sequence motif" description="'HIGH' region">
    <location>
        <begin position="41"/>
        <end position="52"/>
    </location>
</feature>
<feature type="short sequence motif" description="'KMSKS' region">
    <location>
        <begin position="610"/>
        <end position="614"/>
    </location>
</feature>
<feature type="binding site" evidence="1">
    <location>
        <position position="613"/>
    </location>
    <ligand>
        <name>ATP</name>
        <dbReference type="ChEBI" id="CHEBI:30616"/>
    </ligand>
</feature>
<evidence type="ECO:0000255" key="1">
    <source>
        <dbReference type="HAMAP-Rule" id="MF_00049"/>
    </source>
</evidence>
<comment type="catalytic activity">
    <reaction evidence="1">
        <text>tRNA(Leu) + L-leucine + ATP = L-leucyl-tRNA(Leu) + AMP + diphosphate</text>
        <dbReference type="Rhea" id="RHEA:11688"/>
        <dbReference type="Rhea" id="RHEA-COMP:9613"/>
        <dbReference type="Rhea" id="RHEA-COMP:9622"/>
        <dbReference type="ChEBI" id="CHEBI:30616"/>
        <dbReference type="ChEBI" id="CHEBI:33019"/>
        <dbReference type="ChEBI" id="CHEBI:57427"/>
        <dbReference type="ChEBI" id="CHEBI:78442"/>
        <dbReference type="ChEBI" id="CHEBI:78494"/>
        <dbReference type="ChEBI" id="CHEBI:456215"/>
        <dbReference type="EC" id="6.1.1.4"/>
    </reaction>
</comment>
<comment type="subcellular location">
    <subcellularLocation>
        <location evidence="1">Cytoplasm</location>
    </subcellularLocation>
</comment>
<comment type="similarity">
    <text evidence="1">Belongs to the class-I aminoacyl-tRNA synthetase family.</text>
</comment>
<protein>
    <recommendedName>
        <fullName evidence="1">Leucine--tRNA ligase</fullName>
        <ecNumber evidence="1">6.1.1.4</ecNumber>
    </recommendedName>
    <alternativeName>
        <fullName evidence="1">Leucyl-tRNA synthetase</fullName>
        <shortName evidence="1">LeuRS</shortName>
    </alternativeName>
</protein>
<gene>
    <name evidence="1" type="primary">leuS</name>
    <name type="ordered locus">SPT_0302</name>
</gene>
<dbReference type="EC" id="6.1.1.4" evidence="1"/>
<dbReference type="EMBL" id="CP000921">
    <property type="protein sequence ID" value="ACO22249.1"/>
    <property type="molecule type" value="Genomic_DNA"/>
</dbReference>
<dbReference type="RefSeq" id="WP_000011770.1">
    <property type="nucleotide sequence ID" value="NC_012469.1"/>
</dbReference>
<dbReference type="SMR" id="C1CPD0"/>
<dbReference type="KEGG" id="snt:SPT_0302"/>
<dbReference type="HOGENOM" id="CLU_004427_0_0_9"/>
<dbReference type="GO" id="GO:0005829">
    <property type="term" value="C:cytosol"/>
    <property type="evidence" value="ECO:0007669"/>
    <property type="project" value="TreeGrafter"/>
</dbReference>
<dbReference type="GO" id="GO:0002161">
    <property type="term" value="F:aminoacyl-tRNA deacylase activity"/>
    <property type="evidence" value="ECO:0007669"/>
    <property type="project" value="InterPro"/>
</dbReference>
<dbReference type="GO" id="GO:0005524">
    <property type="term" value="F:ATP binding"/>
    <property type="evidence" value="ECO:0007669"/>
    <property type="project" value="UniProtKB-UniRule"/>
</dbReference>
<dbReference type="GO" id="GO:0004823">
    <property type="term" value="F:leucine-tRNA ligase activity"/>
    <property type="evidence" value="ECO:0007669"/>
    <property type="project" value="UniProtKB-UniRule"/>
</dbReference>
<dbReference type="GO" id="GO:0006429">
    <property type="term" value="P:leucyl-tRNA aminoacylation"/>
    <property type="evidence" value="ECO:0007669"/>
    <property type="project" value="UniProtKB-UniRule"/>
</dbReference>
<dbReference type="CDD" id="cd07958">
    <property type="entry name" value="Anticodon_Ia_Leu_BEm"/>
    <property type="match status" value="1"/>
</dbReference>
<dbReference type="CDD" id="cd00812">
    <property type="entry name" value="LeuRS_core"/>
    <property type="match status" value="1"/>
</dbReference>
<dbReference type="FunFam" id="1.10.730.10:FF:000012">
    <property type="entry name" value="Leucine--tRNA ligase"/>
    <property type="match status" value="1"/>
</dbReference>
<dbReference type="FunFam" id="3.40.50.620:FF:000056">
    <property type="entry name" value="Leucine--tRNA ligase"/>
    <property type="match status" value="1"/>
</dbReference>
<dbReference type="FunFam" id="3.40.50.620:FF:000077">
    <property type="entry name" value="Leucine--tRNA ligase"/>
    <property type="match status" value="1"/>
</dbReference>
<dbReference type="FunFam" id="1.10.730.10:FF:000011">
    <property type="entry name" value="Leucine--tRNA ligase chloroplastic/mitochondrial"/>
    <property type="match status" value="1"/>
</dbReference>
<dbReference type="Gene3D" id="3.40.50.620">
    <property type="entry name" value="HUPs"/>
    <property type="match status" value="2"/>
</dbReference>
<dbReference type="Gene3D" id="1.10.730.10">
    <property type="entry name" value="Isoleucyl-tRNA Synthetase, Domain 1"/>
    <property type="match status" value="1"/>
</dbReference>
<dbReference type="Gene3D" id="3.90.740.10">
    <property type="entry name" value="Valyl/Leucyl/Isoleucyl-tRNA synthetase, editing domain"/>
    <property type="match status" value="1"/>
</dbReference>
<dbReference type="HAMAP" id="MF_00049_B">
    <property type="entry name" value="Leu_tRNA_synth_B"/>
    <property type="match status" value="1"/>
</dbReference>
<dbReference type="InterPro" id="IPR001412">
    <property type="entry name" value="aa-tRNA-synth_I_CS"/>
</dbReference>
<dbReference type="InterPro" id="IPR002300">
    <property type="entry name" value="aa-tRNA-synth_Ia"/>
</dbReference>
<dbReference type="InterPro" id="IPR002302">
    <property type="entry name" value="Leu-tRNA-ligase"/>
</dbReference>
<dbReference type="InterPro" id="IPR025709">
    <property type="entry name" value="Leu_tRNA-synth_edit"/>
</dbReference>
<dbReference type="InterPro" id="IPR013155">
    <property type="entry name" value="M/V/L/I-tRNA-synth_anticd-bd"/>
</dbReference>
<dbReference type="InterPro" id="IPR015413">
    <property type="entry name" value="Methionyl/Leucyl_tRNA_Synth"/>
</dbReference>
<dbReference type="InterPro" id="IPR014729">
    <property type="entry name" value="Rossmann-like_a/b/a_fold"/>
</dbReference>
<dbReference type="InterPro" id="IPR009080">
    <property type="entry name" value="tRNAsynth_Ia_anticodon-bd"/>
</dbReference>
<dbReference type="InterPro" id="IPR009008">
    <property type="entry name" value="Val/Leu/Ile-tRNA-synth_edit"/>
</dbReference>
<dbReference type="NCBIfam" id="TIGR00396">
    <property type="entry name" value="leuS_bact"/>
    <property type="match status" value="1"/>
</dbReference>
<dbReference type="PANTHER" id="PTHR43740:SF2">
    <property type="entry name" value="LEUCINE--TRNA LIGASE, MITOCHONDRIAL"/>
    <property type="match status" value="1"/>
</dbReference>
<dbReference type="PANTHER" id="PTHR43740">
    <property type="entry name" value="LEUCYL-TRNA SYNTHETASE"/>
    <property type="match status" value="1"/>
</dbReference>
<dbReference type="Pfam" id="PF08264">
    <property type="entry name" value="Anticodon_1"/>
    <property type="match status" value="1"/>
</dbReference>
<dbReference type="Pfam" id="PF00133">
    <property type="entry name" value="tRNA-synt_1"/>
    <property type="match status" value="2"/>
</dbReference>
<dbReference type="Pfam" id="PF13603">
    <property type="entry name" value="tRNA-synt_1_2"/>
    <property type="match status" value="1"/>
</dbReference>
<dbReference type="Pfam" id="PF09334">
    <property type="entry name" value="tRNA-synt_1g"/>
    <property type="match status" value="1"/>
</dbReference>
<dbReference type="PRINTS" id="PR00985">
    <property type="entry name" value="TRNASYNTHLEU"/>
</dbReference>
<dbReference type="SUPFAM" id="SSF47323">
    <property type="entry name" value="Anticodon-binding domain of a subclass of class I aminoacyl-tRNA synthetases"/>
    <property type="match status" value="1"/>
</dbReference>
<dbReference type="SUPFAM" id="SSF52374">
    <property type="entry name" value="Nucleotidylyl transferase"/>
    <property type="match status" value="1"/>
</dbReference>
<dbReference type="SUPFAM" id="SSF50677">
    <property type="entry name" value="ValRS/IleRS/LeuRS editing domain"/>
    <property type="match status" value="1"/>
</dbReference>
<dbReference type="PROSITE" id="PS00178">
    <property type="entry name" value="AA_TRNA_LIGASE_I"/>
    <property type="match status" value="1"/>
</dbReference>
<proteinExistence type="inferred from homology"/>
<sequence length="833" mass="94429">MSFYNHKEIEPKWQGYWAEHHTFKTGTDASKPKFYALDMFPYPSGAGLHVGHPEGYTATDILSRYKRAQGYNVLHPMGWDAFGLPAEQYAMDTGNDPAEFTAENIANFKRQINALGFSYDWDREVNTTDPNYYKWTQWIFTKLYEKGLAYEAEVPVNWVEELGTAIANEEVLPDGTSERGGYPVVRKPMRQWMLKITAYAERLLNDLDELDWSESIKDMQRNWIGKSTGANVTFKVKGTDKEFTVFTTRPDTLFGATFTVLAPEHELVDAITSSEQAEAVADYKHQASLKSDLVRTDLAKEKTGVWTGAYAINPVNGKEMPIWIADYVLASYGTGAVMAVPAHDQRDWEFAKQFDLPIVEVLEGGNVEEAAYTEDGLHVNSDFLDGLNKEDAIAKIVAYLEEKGCGQEKVTYRLRDWLFSRQRYWGEPIPIIHWEDGTSTAVPETELPLVLPVTKDIRPSGTGESPLANLTDWLEVTREDGVKGRRETNTMPQWAGSSWYYLRYIDPHNTEKLADEDLLKQWLPVDIYVGGAEHAVLHLLYARFWHKFLYDLGVVPTKEPFQKLFNQGMILGTSYRDHRGALVTTDKVEKRDGSFFHVETGEELEQAPAKMSKSLKNVVNPDDVVEQYGADTLRVYEMFMGPLDASIAWSEEGLEGSRKFLDRVYRLITSKEILAENNGALDKAYNETVKAVTEQIESLKFNTAIAQLMVFVNAANKEDKLYIDYAKGFIQLIAPFAPHLAEELWQTVAETGESISYVAWPTWDESKLVEDEIEIVVQIKGKVRAKLMVAKDLSREELQEIALADEKVKAEIDGKEIVKVISVPNKLVNIVVK</sequence>
<organism>
    <name type="scientific">Streptococcus pneumoniae (strain Taiwan19F-14)</name>
    <dbReference type="NCBI Taxonomy" id="487213"/>
    <lineage>
        <taxon>Bacteria</taxon>
        <taxon>Bacillati</taxon>
        <taxon>Bacillota</taxon>
        <taxon>Bacilli</taxon>
        <taxon>Lactobacillales</taxon>
        <taxon>Streptococcaceae</taxon>
        <taxon>Streptococcus</taxon>
    </lineage>
</organism>
<name>SYL_STRZT</name>
<accession>C1CPD0</accession>
<reference key="1">
    <citation type="journal article" date="2010" name="Genome Biol.">
        <title>Structure and dynamics of the pan-genome of Streptococcus pneumoniae and closely related species.</title>
        <authorList>
            <person name="Donati C."/>
            <person name="Hiller N.L."/>
            <person name="Tettelin H."/>
            <person name="Muzzi A."/>
            <person name="Croucher N.J."/>
            <person name="Angiuoli S.V."/>
            <person name="Oggioni M."/>
            <person name="Dunning Hotopp J.C."/>
            <person name="Hu F.Z."/>
            <person name="Riley D.R."/>
            <person name="Covacci A."/>
            <person name="Mitchell T.J."/>
            <person name="Bentley S.D."/>
            <person name="Kilian M."/>
            <person name="Ehrlich G.D."/>
            <person name="Rappuoli R."/>
            <person name="Moxon E.R."/>
            <person name="Masignani V."/>
        </authorList>
    </citation>
    <scope>NUCLEOTIDE SEQUENCE [LARGE SCALE GENOMIC DNA]</scope>
    <source>
        <strain>Taiwan19F-14</strain>
    </source>
</reference>